<dbReference type="EC" id="2.7.4.8" evidence="2"/>
<dbReference type="EMBL" id="CP000097">
    <property type="protein sequence ID" value="ABB26687.1"/>
    <property type="status" value="ALT_INIT"/>
    <property type="molecule type" value="Genomic_DNA"/>
</dbReference>
<dbReference type="RefSeq" id="WP_041425511.1">
    <property type="nucleotide sequence ID" value="NC_007513.1"/>
</dbReference>
<dbReference type="SMR" id="Q3AWM1"/>
<dbReference type="STRING" id="316279.Syncc9902_1730"/>
<dbReference type="KEGG" id="sye:Syncc9902_1730"/>
<dbReference type="eggNOG" id="COG0194">
    <property type="taxonomic scope" value="Bacteria"/>
</dbReference>
<dbReference type="HOGENOM" id="CLU_001715_1_1_3"/>
<dbReference type="OrthoDB" id="9808150at2"/>
<dbReference type="Proteomes" id="UP000002712">
    <property type="component" value="Chromosome"/>
</dbReference>
<dbReference type="GO" id="GO:0005829">
    <property type="term" value="C:cytosol"/>
    <property type="evidence" value="ECO:0007669"/>
    <property type="project" value="TreeGrafter"/>
</dbReference>
<dbReference type="GO" id="GO:0005524">
    <property type="term" value="F:ATP binding"/>
    <property type="evidence" value="ECO:0007669"/>
    <property type="project" value="UniProtKB-UniRule"/>
</dbReference>
<dbReference type="GO" id="GO:0004385">
    <property type="term" value="F:guanylate kinase activity"/>
    <property type="evidence" value="ECO:0007669"/>
    <property type="project" value="UniProtKB-UniRule"/>
</dbReference>
<dbReference type="CDD" id="cd00071">
    <property type="entry name" value="GMPK"/>
    <property type="match status" value="1"/>
</dbReference>
<dbReference type="FunFam" id="3.30.63.10:FF:000002">
    <property type="entry name" value="Guanylate kinase 1"/>
    <property type="match status" value="1"/>
</dbReference>
<dbReference type="Gene3D" id="3.30.63.10">
    <property type="entry name" value="Guanylate Kinase phosphate binding domain"/>
    <property type="match status" value="1"/>
</dbReference>
<dbReference type="Gene3D" id="3.40.50.300">
    <property type="entry name" value="P-loop containing nucleotide triphosphate hydrolases"/>
    <property type="match status" value="1"/>
</dbReference>
<dbReference type="HAMAP" id="MF_00328">
    <property type="entry name" value="Guanylate_kinase"/>
    <property type="match status" value="1"/>
</dbReference>
<dbReference type="InterPro" id="IPR008145">
    <property type="entry name" value="GK/Ca_channel_bsu"/>
</dbReference>
<dbReference type="InterPro" id="IPR008144">
    <property type="entry name" value="Guanylate_kin-like_dom"/>
</dbReference>
<dbReference type="InterPro" id="IPR017665">
    <property type="entry name" value="Guanylate_kinase"/>
</dbReference>
<dbReference type="InterPro" id="IPR020590">
    <property type="entry name" value="Guanylate_kinase_CS"/>
</dbReference>
<dbReference type="InterPro" id="IPR027417">
    <property type="entry name" value="P-loop_NTPase"/>
</dbReference>
<dbReference type="NCBIfam" id="TIGR03263">
    <property type="entry name" value="guanyl_kin"/>
    <property type="match status" value="1"/>
</dbReference>
<dbReference type="PANTHER" id="PTHR23117:SF13">
    <property type="entry name" value="GUANYLATE KINASE"/>
    <property type="match status" value="1"/>
</dbReference>
<dbReference type="PANTHER" id="PTHR23117">
    <property type="entry name" value="GUANYLATE KINASE-RELATED"/>
    <property type="match status" value="1"/>
</dbReference>
<dbReference type="Pfam" id="PF00625">
    <property type="entry name" value="Guanylate_kin"/>
    <property type="match status" value="1"/>
</dbReference>
<dbReference type="SMART" id="SM00072">
    <property type="entry name" value="GuKc"/>
    <property type="match status" value="1"/>
</dbReference>
<dbReference type="SUPFAM" id="SSF52540">
    <property type="entry name" value="P-loop containing nucleoside triphosphate hydrolases"/>
    <property type="match status" value="1"/>
</dbReference>
<dbReference type="PROSITE" id="PS00856">
    <property type="entry name" value="GUANYLATE_KINASE_1"/>
    <property type="match status" value="1"/>
</dbReference>
<dbReference type="PROSITE" id="PS50052">
    <property type="entry name" value="GUANYLATE_KINASE_2"/>
    <property type="match status" value="1"/>
</dbReference>
<feature type="chain" id="PRO_0000266422" description="Guanylate kinase">
    <location>
        <begin position="1"/>
        <end position="187"/>
    </location>
</feature>
<feature type="domain" description="Guanylate kinase-like" evidence="2">
    <location>
        <begin position="5"/>
        <end position="183"/>
    </location>
</feature>
<feature type="binding site" evidence="2">
    <location>
        <begin position="12"/>
        <end position="19"/>
    </location>
    <ligand>
        <name>ATP</name>
        <dbReference type="ChEBI" id="CHEBI:30616"/>
    </ligand>
</feature>
<reference key="1">
    <citation type="submission" date="2005-08" db="EMBL/GenBank/DDBJ databases">
        <title>Complete sequence of Synechococcus sp. CC9902.</title>
        <authorList>
            <person name="Copeland A."/>
            <person name="Lucas S."/>
            <person name="Lapidus A."/>
            <person name="Barry K."/>
            <person name="Detter J.C."/>
            <person name="Glavina T."/>
            <person name="Hammon N."/>
            <person name="Israni S."/>
            <person name="Pitluck S."/>
            <person name="Martinez M."/>
            <person name="Schmutz J."/>
            <person name="Larimer F."/>
            <person name="Land M."/>
            <person name="Kyrpides N."/>
            <person name="Ivanova N."/>
            <person name="Richardson P."/>
        </authorList>
    </citation>
    <scope>NUCLEOTIDE SEQUENCE [LARGE SCALE GENOMIC DNA]</scope>
    <source>
        <strain>CC9902</strain>
    </source>
</reference>
<accession>Q3AWM1</accession>
<protein>
    <recommendedName>
        <fullName evidence="2">Guanylate kinase</fullName>
        <ecNumber evidence="2">2.7.4.8</ecNumber>
    </recommendedName>
    <alternativeName>
        <fullName evidence="2">GMP kinase</fullName>
    </alternativeName>
</protein>
<sequence length="187" mass="20773">MAHNGRLTVLTGPSGVGKGTLVKRLLDQHPEIWLSVSATTRQPRAGEEEGVSYFFHPRDTFDALVAAGGLLEWAEFASNCYGTPRDPVEEHLAAGRPVLLEIELEGARQVRTSFPDAFQVFLAPPSFAELERRIRGRGTDTEDAIQRRLARAREELNAQNEFDAVVVNDDLDQALKQLETHMQLQAP</sequence>
<comment type="function">
    <text evidence="2">Essential for recycling GMP and indirectly, cGMP.</text>
</comment>
<comment type="function">
    <text evidence="1">(Microbial infection) Catalyzes the phosphorylation of dZMP to dZDP, when the bacterium is infected by a phage that produces the substrate for the synthesis of dZTP (2- amino-2'-deoxyadenosine 5'-triphosphate), which is then used by the phage as a DNA polymerase substrate.</text>
</comment>
<comment type="catalytic activity">
    <reaction evidence="2">
        <text>GMP + ATP = GDP + ADP</text>
        <dbReference type="Rhea" id="RHEA:20780"/>
        <dbReference type="ChEBI" id="CHEBI:30616"/>
        <dbReference type="ChEBI" id="CHEBI:58115"/>
        <dbReference type="ChEBI" id="CHEBI:58189"/>
        <dbReference type="ChEBI" id="CHEBI:456216"/>
        <dbReference type="EC" id="2.7.4.8"/>
    </reaction>
</comment>
<comment type="catalytic activity">
    <reaction evidence="1">
        <text>dZMP + ATP = dZDP + ADP</text>
        <dbReference type="Rhea" id="RHEA:67640"/>
        <dbReference type="ChEBI" id="CHEBI:30616"/>
        <dbReference type="ChEBI" id="CHEBI:172927"/>
        <dbReference type="ChEBI" id="CHEBI:172929"/>
        <dbReference type="ChEBI" id="CHEBI:456216"/>
    </reaction>
</comment>
<comment type="pathway">
    <text evidence="1">Purine metabolism.</text>
</comment>
<comment type="subcellular location">
    <subcellularLocation>
        <location evidence="2">Cytoplasm</location>
    </subcellularLocation>
</comment>
<comment type="similarity">
    <text evidence="2">Belongs to the guanylate kinase family.</text>
</comment>
<comment type="sequence caution" evidence="3">
    <conflict type="erroneous initiation">
        <sequence resource="EMBL-CDS" id="ABB26687"/>
    </conflict>
</comment>
<name>KGUA_SYNS9</name>
<evidence type="ECO:0000250" key="1">
    <source>
        <dbReference type="UniProtKB" id="Q9KNM4"/>
    </source>
</evidence>
<evidence type="ECO:0000255" key="2">
    <source>
        <dbReference type="HAMAP-Rule" id="MF_00328"/>
    </source>
</evidence>
<evidence type="ECO:0000305" key="3"/>
<organism>
    <name type="scientific">Synechococcus sp. (strain CC9902)</name>
    <dbReference type="NCBI Taxonomy" id="316279"/>
    <lineage>
        <taxon>Bacteria</taxon>
        <taxon>Bacillati</taxon>
        <taxon>Cyanobacteriota</taxon>
        <taxon>Cyanophyceae</taxon>
        <taxon>Synechococcales</taxon>
        <taxon>Synechococcaceae</taxon>
        <taxon>Synechococcus</taxon>
    </lineage>
</organism>
<keyword id="KW-0067">ATP-binding</keyword>
<keyword id="KW-0963">Cytoplasm</keyword>
<keyword id="KW-0418">Kinase</keyword>
<keyword id="KW-0547">Nucleotide-binding</keyword>
<keyword id="KW-1185">Reference proteome</keyword>
<keyword id="KW-0808">Transferase</keyword>
<gene>
    <name evidence="2" type="primary">gmk</name>
    <name type="ordered locus">Syncc9902_1730</name>
</gene>
<proteinExistence type="inferred from homology"/>